<evidence type="ECO:0000250" key="1"/>
<evidence type="ECO:0000305" key="2"/>
<comment type="function">
    <text evidence="1">General factor that plays a role in the activation of archaeal genes transcribed by RNA polymerase. Binds specifically to the TATA box promoter element which lies close to the position of transcription initiation (By similarity).</text>
</comment>
<comment type="similarity">
    <text evidence="2">Belongs to the TBP family.</text>
</comment>
<reference key="1">
    <citation type="journal article" date="1997" name="Nature">
        <title>The complete genome sequence of the hyperthermophilic, sulphate-reducing archaeon Archaeoglobus fulgidus.</title>
        <authorList>
            <person name="Klenk H.-P."/>
            <person name="Clayton R.A."/>
            <person name="Tomb J.-F."/>
            <person name="White O."/>
            <person name="Nelson K.E."/>
            <person name="Ketchum K.A."/>
            <person name="Dodson R.J."/>
            <person name="Gwinn M.L."/>
            <person name="Hickey E.K."/>
            <person name="Peterson J.D."/>
            <person name="Richardson D.L."/>
            <person name="Kerlavage A.R."/>
            <person name="Graham D.E."/>
            <person name="Kyrpides N.C."/>
            <person name="Fleischmann R.D."/>
            <person name="Quackenbush J."/>
            <person name="Lee N.H."/>
            <person name="Sutton G.G."/>
            <person name="Gill S.R."/>
            <person name="Kirkness E.F."/>
            <person name="Dougherty B.A."/>
            <person name="McKenney K."/>
            <person name="Adams M.D."/>
            <person name="Loftus B.J."/>
            <person name="Peterson S.N."/>
            <person name="Reich C.I."/>
            <person name="McNeil L.K."/>
            <person name="Badger J.H."/>
            <person name="Glodek A."/>
            <person name="Zhou L."/>
            <person name="Overbeek R."/>
            <person name="Gocayne J.D."/>
            <person name="Weidman J.F."/>
            <person name="McDonald L.A."/>
            <person name="Utterback T.R."/>
            <person name="Cotton M.D."/>
            <person name="Spriggs T."/>
            <person name="Artiach P."/>
            <person name="Kaine B.P."/>
            <person name="Sykes S.M."/>
            <person name="Sadow P.W."/>
            <person name="D'Andrea K.P."/>
            <person name="Bowman C."/>
            <person name="Fujii C."/>
            <person name="Garland S.A."/>
            <person name="Mason T.M."/>
            <person name="Olsen G.J."/>
            <person name="Fraser C.M."/>
            <person name="Smith H.O."/>
            <person name="Woese C.R."/>
            <person name="Venter J.C."/>
        </authorList>
    </citation>
    <scope>NUCLEOTIDE SEQUENCE [LARGE SCALE GENOMIC DNA]</scope>
    <source>
        <strain>ATCC 49558 / DSM 4304 / JCM 9628 / NBRC 100126 / VC-16</strain>
    </source>
</reference>
<feature type="chain" id="PRO_0000153998" description="TATA-box-binding protein">
    <location>
        <begin position="1"/>
        <end position="183"/>
    </location>
</feature>
<feature type="repeat" description="1">
    <location>
        <begin position="8"/>
        <end position="84"/>
    </location>
</feature>
<feature type="repeat" description="2">
    <location>
        <begin position="99"/>
        <end position="177"/>
    </location>
</feature>
<dbReference type="EMBL" id="AE000782">
    <property type="protein sequence ID" value="AAB90862.1"/>
    <property type="molecule type" value="Genomic_DNA"/>
</dbReference>
<dbReference type="PIR" id="E69296">
    <property type="entry name" value="E69296"/>
</dbReference>
<dbReference type="RefSeq" id="WP_010877880.1">
    <property type="nucleotide sequence ID" value="NC_000917.1"/>
</dbReference>
<dbReference type="SMR" id="O29874"/>
<dbReference type="STRING" id="224325.AF_0373"/>
<dbReference type="PaxDb" id="224325-AF_0373"/>
<dbReference type="EnsemblBacteria" id="AAB90862">
    <property type="protein sequence ID" value="AAB90862"/>
    <property type="gene ID" value="AF_0373"/>
</dbReference>
<dbReference type="KEGG" id="afu:AF_0373"/>
<dbReference type="eggNOG" id="arCOG01764">
    <property type="taxonomic scope" value="Archaea"/>
</dbReference>
<dbReference type="HOGENOM" id="CLU_060161_4_3_2"/>
<dbReference type="OrthoDB" id="350539at2157"/>
<dbReference type="PhylomeDB" id="O29874"/>
<dbReference type="Proteomes" id="UP000002199">
    <property type="component" value="Chromosome"/>
</dbReference>
<dbReference type="GO" id="GO:0003677">
    <property type="term" value="F:DNA binding"/>
    <property type="evidence" value="ECO:0007669"/>
    <property type="project" value="UniProtKB-KW"/>
</dbReference>
<dbReference type="GO" id="GO:0003700">
    <property type="term" value="F:DNA-binding transcription factor activity"/>
    <property type="evidence" value="ECO:0007669"/>
    <property type="project" value="UniProtKB-UniRule"/>
</dbReference>
<dbReference type="GO" id="GO:0006352">
    <property type="term" value="P:DNA-templated transcription initiation"/>
    <property type="evidence" value="ECO:0007669"/>
    <property type="project" value="InterPro"/>
</dbReference>
<dbReference type="CDD" id="cd04518">
    <property type="entry name" value="TBP_archaea"/>
    <property type="match status" value="1"/>
</dbReference>
<dbReference type="FunFam" id="3.30.310.10:FF:000007">
    <property type="entry name" value="TATA-box-binding protein"/>
    <property type="match status" value="1"/>
</dbReference>
<dbReference type="FunFam" id="3.30.310.10:FF:000010">
    <property type="entry name" value="TATA-box-binding protein"/>
    <property type="match status" value="1"/>
</dbReference>
<dbReference type="Gene3D" id="3.30.310.10">
    <property type="entry name" value="TATA-Binding Protein"/>
    <property type="match status" value="2"/>
</dbReference>
<dbReference type="HAMAP" id="MF_00408">
    <property type="entry name" value="TATA_bind_prot_arch"/>
    <property type="match status" value="1"/>
</dbReference>
<dbReference type="InterPro" id="IPR000814">
    <property type="entry name" value="TBP"/>
</dbReference>
<dbReference type="InterPro" id="IPR033711">
    <property type="entry name" value="TBP_archaea"/>
</dbReference>
<dbReference type="InterPro" id="IPR030491">
    <property type="entry name" value="TBP_CS"/>
</dbReference>
<dbReference type="InterPro" id="IPR012295">
    <property type="entry name" value="TBP_dom_sf"/>
</dbReference>
<dbReference type="NCBIfam" id="NF001593">
    <property type="entry name" value="PRK00394.1-2"/>
    <property type="match status" value="1"/>
</dbReference>
<dbReference type="NCBIfam" id="NF001597">
    <property type="entry name" value="PRK00394.2-2"/>
    <property type="match status" value="1"/>
</dbReference>
<dbReference type="PANTHER" id="PTHR10126">
    <property type="entry name" value="TATA-BOX BINDING PROTEIN"/>
    <property type="match status" value="1"/>
</dbReference>
<dbReference type="Pfam" id="PF00352">
    <property type="entry name" value="TBP"/>
    <property type="match status" value="2"/>
</dbReference>
<dbReference type="PRINTS" id="PR00686">
    <property type="entry name" value="TIFACTORIID"/>
</dbReference>
<dbReference type="SUPFAM" id="SSF55945">
    <property type="entry name" value="TATA-box binding protein-like"/>
    <property type="match status" value="2"/>
</dbReference>
<dbReference type="PROSITE" id="PS00351">
    <property type="entry name" value="TFIID"/>
    <property type="match status" value="1"/>
</dbReference>
<organism>
    <name type="scientific">Archaeoglobus fulgidus (strain ATCC 49558 / DSM 4304 / JCM 9628 / NBRC 100126 / VC-16)</name>
    <dbReference type="NCBI Taxonomy" id="224325"/>
    <lineage>
        <taxon>Archaea</taxon>
        <taxon>Methanobacteriati</taxon>
        <taxon>Methanobacteriota</taxon>
        <taxon>Archaeoglobi</taxon>
        <taxon>Archaeoglobales</taxon>
        <taxon>Archaeoglobaceae</taxon>
        <taxon>Archaeoglobus</taxon>
    </lineage>
</organism>
<keyword id="KW-0238">DNA-binding</keyword>
<keyword id="KW-1185">Reference proteome</keyword>
<keyword id="KW-0677">Repeat</keyword>
<keyword id="KW-0804">Transcription</keyword>
<keyword id="KW-0805">Transcription regulation</keyword>
<gene>
    <name type="primary">tbp</name>
    <name type="ordered locus">AF_0373</name>
</gene>
<accession>O29874</accession>
<protein>
    <recommendedName>
        <fullName>TATA-box-binding protein</fullName>
    </recommendedName>
    <alternativeName>
        <fullName>Box A-binding protein</fullName>
        <shortName>BAP</shortName>
    </alternativeName>
    <alternativeName>
        <fullName>TATA sequence-binding protein</fullName>
        <shortName>TBP</shortName>
    </alternativeName>
    <alternativeName>
        <fullName>TATA-box factor</fullName>
    </alternativeName>
</protein>
<proteinExistence type="inferred from homology"/>
<sequence>MQDYKIKIENVVASTQIGENIDLNKISREIKDSEYKPKQFPGLVLRTKEPKAAALVFRSGKVVCTGSKSVEDARRAVKQIVKMLKEIGISVIDEPEVKVQNIVASADLGVDLNLNAIAIGLGLENIEYEPEQFPGLVYRLDNPRVVVLIFGSGKMVVTGGKSPEDARKAVERISEELRTLGLM</sequence>
<name>TBP_ARCFU</name>